<protein>
    <recommendedName>
        <fullName evidence="1">Small ribosomal subunit protein uS15</fullName>
    </recommendedName>
    <alternativeName>
        <fullName evidence="2">30S ribosomal protein S15</fullName>
    </alternativeName>
</protein>
<feature type="chain" id="PRO_0000115451" description="Small ribosomal subunit protein uS15">
    <location>
        <begin position="1"/>
        <end position="90"/>
    </location>
</feature>
<sequence>MALNLEKKQEIIKAFATKANDTGSCEVQVALLNERIKLLTEHLKTNPKDHSSRLGLLKLVAQRRNLLKYIKRTDHVRYVVLIEKLGIKDR</sequence>
<comment type="function">
    <text evidence="1">One of the primary rRNA binding proteins, it binds directly to 16S rRNA where it helps nucleate assembly of the platform of the 30S subunit by binding and bridging several RNA helices of the 16S rRNA.</text>
</comment>
<comment type="function">
    <text evidence="1">Forms an intersubunit bridge (bridge B4) with the 23S rRNA of the 50S subunit in the ribosome.</text>
</comment>
<comment type="subunit">
    <text evidence="1">Part of the 30S ribosomal subunit. Forms a bridge to the 50S subunit in the 70S ribosome, contacting the 23S rRNA.</text>
</comment>
<comment type="similarity">
    <text evidence="1">Belongs to the universal ribosomal protein uS15 family.</text>
</comment>
<name>RS15_HELPJ</name>
<gene>
    <name evidence="1" type="primary">rpsO</name>
    <name type="ordered locus">jhp_0384</name>
</gene>
<reference key="1">
    <citation type="journal article" date="1999" name="Nature">
        <title>Genomic sequence comparison of two unrelated isolates of the human gastric pathogen Helicobacter pylori.</title>
        <authorList>
            <person name="Alm R.A."/>
            <person name="Ling L.-S.L."/>
            <person name="Moir D.T."/>
            <person name="King B.L."/>
            <person name="Brown E.D."/>
            <person name="Doig P.C."/>
            <person name="Smith D.R."/>
            <person name="Noonan B."/>
            <person name="Guild B.C."/>
            <person name="deJonge B.L."/>
            <person name="Carmel G."/>
            <person name="Tummino P.J."/>
            <person name="Caruso A."/>
            <person name="Uria-Nickelsen M."/>
            <person name="Mills D.M."/>
            <person name="Ives C."/>
            <person name="Gibson R."/>
            <person name="Merberg D."/>
            <person name="Mills S.D."/>
            <person name="Jiang Q."/>
            <person name="Taylor D.E."/>
            <person name="Vovis G.F."/>
            <person name="Trust T.J."/>
        </authorList>
    </citation>
    <scope>NUCLEOTIDE SEQUENCE [LARGE SCALE GENOMIC DNA]</scope>
    <source>
        <strain>J99 / ATCC 700824</strain>
    </source>
</reference>
<proteinExistence type="inferred from homology"/>
<keyword id="KW-0687">Ribonucleoprotein</keyword>
<keyword id="KW-0689">Ribosomal protein</keyword>
<keyword id="KW-0694">RNA-binding</keyword>
<keyword id="KW-0699">rRNA-binding</keyword>
<evidence type="ECO:0000255" key="1">
    <source>
        <dbReference type="HAMAP-Rule" id="MF_01343"/>
    </source>
</evidence>
<evidence type="ECO:0000305" key="2"/>
<dbReference type="EMBL" id="AE001439">
    <property type="protein sequence ID" value="AAD05963.1"/>
    <property type="molecule type" value="Genomic_DNA"/>
</dbReference>
<dbReference type="PIR" id="F71937">
    <property type="entry name" value="F71937"/>
</dbReference>
<dbReference type="RefSeq" id="WP_001197109.1">
    <property type="nucleotide sequence ID" value="NC_000921.1"/>
</dbReference>
<dbReference type="SMR" id="Q9ZM39"/>
<dbReference type="KEGG" id="hpj:jhp_0384"/>
<dbReference type="PATRIC" id="fig|85963.30.peg.626"/>
<dbReference type="eggNOG" id="COG0184">
    <property type="taxonomic scope" value="Bacteria"/>
</dbReference>
<dbReference type="Proteomes" id="UP000000804">
    <property type="component" value="Chromosome"/>
</dbReference>
<dbReference type="GO" id="GO:0022627">
    <property type="term" value="C:cytosolic small ribosomal subunit"/>
    <property type="evidence" value="ECO:0007669"/>
    <property type="project" value="TreeGrafter"/>
</dbReference>
<dbReference type="GO" id="GO:0019843">
    <property type="term" value="F:rRNA binding"/>
    <property type="evidence" value="ECO:0007669"/>
    <property type="project" value="UniProtKB-UniRule"/>
</dbReference>
<dbReference type="GO" id="GO:0003735">
    <property type="term" value="F:structural constituent of ribosome"/>
    <property type="evidence" value="ECO:0007669"/>
    <property type="project" value="InterPro"/>
</dbReference>
<dbReference type="GO" id="GO:0006412">
    <property type="term" value="P:translation"/>
    <property type="evidence" value="ECO:0007669"/>
    <property type="project" value="UniProtKB-UniRule"/>
</dbReference>
<dbReference type="CDD" id="cd00353">
    <property type="entry name" value="Ribosomal_S15p_S13e"/>
    <property type="match status" value="1"/>
</dbReference>
<dbReference type="FunFam" id="1.10.287.10:FF:000002">
    <property type="entry name" value="30S ribosomal protein S15"/>
    <property type="match status" value="1"/>
</dbReference>
<dbReference type="Gene3D" id="6.10.250.3130">
    <property type="match status" value="1"/>
</dbReference>
<dbReference type="Gene3D" id="1.10.287.10">
    <property type="entry name" value="S15/NS1, RNA-binding"/>
    <property type="match status" value="1"/>
</dbReference>
<dbReference type="HAMAP" id="MF_01343_B">
    <property type="entry name" value="Ribosomal_uS15_B"/>
    <property type="match status" value="1"/>
</dbReference>
<dbReference type="InterPro" id="IPR000589">
    <property type="entry name" value="Ribosomal_uS15"/>
</dbReference>
<dbReference type="InterPro" id="IPR005290">
    <property type="entry name" value="Ribosomal_uS15_bac-type"/>
</dbReference>
<dbReference type="InterPro" id="IPR009068">
    <property type="entry name" value="uS15_NS1_RNA-bd_sf"/>
</dbReference>
<dbReference type="NCBIfam" id="TIGR00952">
    <property type="entry name" value="S15_bact"/>
    <property type="match status" value="1"/>
</dbReference>
<dbReference type="PANTHER" id="PTHR23321">
    <property type="entry name" value="RIBOSOMAL PROTEIN S15, BACTERIAL AND ORGANELLAR"/>
    <property type="match status" value="1"/>
</dbReference>
<dbReference type="PANTHER" id="PTHR23321:SF26">
    <property type="entry name" value="SMALL RIBOSOMAL SUBUNIT PROTEIN US15M"/>
    <property type="match status" value="1"/>
</dbReference>
<dbReference type="Pfam" id="PF00312">
    <property type="entry name" value="Ribosomal_S15"/>
    <property type="match status" value="1"/>
</dbReference>
<dbReference type="SMART" id="SM01387">
    <property type="entry name" value="Ribosomal_S15"/>
    <property type="match status" value="1"/>
</dbReference>
<dbReference type="SUPFAM" id="SSF47060">
    <property type="entry name" value="S15/NS1 RNA-binding domain"/>
    <property type="match status" value="1"/>
</dbReference>
<dbReference type="PROSITE" id="PS00362">
    <property type="entry name" value="RIBOSOMAL_S15"/>
    <property type="match status" value="1"/>
</dbReference>
<organism>
    <name type="scientific">Helicobacter pylori (strain J99 / ATCC 700824)</name>
    <name type="common">Campylobacter pylori J99</name>
    <dbReference type="NCBI Taxonomy" id="85963"/>
    <lineage>
        <taxon>Bacteria</taxon>
        <taxon>Pseudomonadati</taxon>
        <taxon>Campylobacterota</taxon>
        <taxon>Epsilonproteobacteria</taxon>
        <taxon>Campylobacterales</taxon>
        <taxon>Helicobacteraceae</taxon>
        <taxon>Helicobacter</taxon>
    </lineage>
</organism>
<accession>Q9ZM39</accession>